<evidence type="ECO:0000256" key="1">
    <source>
        <dbReference type="SAM" id="MobiDB-lite"/>
    </source>
</evidence>
<evidence type="ECO:0000305" key="2"/>
<accession>P03847</accession>
<accession>P13947</accession>
<feature type="chain" id="PRO_0000068291" description="Replication regulatory protein repA2">
    <location>
        <begin position="1"/>
        <end position="84"/>
    </location>
</feature>
<feature type="region of interest" description="Disordered" evidence="1">
    <location>
        <begin position="1"/>
        <end position="31"/>
    </location>
</feature>
<feature type="compositionally biased region" description="Polar residues" evidence="1">
    <location>
        <begin position="1"/>
        <end position="13"/>
    </location>
</feature>
<feature type="sequence conflict" description="In Ref. 2; AAA26065." evidence="2" ref="2">
    <original>Q</original>
    <variation>H</variation>
    <location>
        <position position="3"/>
    </location>
</feature>
<feature type="sequence conflict" description="In Ref. 2; AAA26065." evidence="2" ref="2">
    <original>SEAQKRCM</original>
    <variation>K</variation>
    <location>
        <begin position="77"/>
        <end position="84"/>
    </location>
</feature>
<feature type="sequence conflict" description="In Ref. 1." evidence="2" ref="1">
    <original>KRCM</original>
    <variation>NDACDDGLTFLSVQKISARLLIV</variation>
    <location>
        <begin position="81"/>
        <end position="84"/>
    </location>
</feature>
<keyword id="KW-0238">DNA-binding</keyword>
<keyword id="KW-0614">Plasmid</keyword>
<keyword id="KW-0615">Plasmid copy control</keyword>
<keyword id="KW-0678">Repressor</keyword>
<keyword id="KW-0804">Transcription</keyword>
<keyword id="KW-0805">Transcription regulation</keyword>
<dbReference type="EMBL" id="J01762">
    <property type="protein sequence ID" value="AAA92255.1"/>
    <property type="molecule type" value="Genomic_DNA"/>
</dbReference>
<dbReference type="EMBL" id="M26840">
    <property type="protein sequence ID" value="AAA26065.1"/>
    <property type="molecule type" value="Genomic_DNA"/>
</dbReference>
<dbReference type="EMBL" id="V00318">
    <property type="protein sequence ID" value="CAA23608.1"/>
    <property type="molecule type" value="Genomic_DNA"/>
</dbReference>
<dbReference type="EMBL" id="M18273">
    <property type="protein sequence ID" value="AAA88332.1"/>
    <property type="molecule type" value="Genomic_DNA"/>
</dbReference>
<dbReference type="EMBL" id="X02302">
    <property type="protein sequence ID" value="CAA26165.1"/>
    <property type="molecule type" value="Genomic_DNA"/>
</dbReference>
<dbReference type="EMBL" id="X55895">
    <property type="protein sequence ID" value="CAA39380.1"/>
    <property type="molecule type" value="Genomic_DNA"/>
</dbReference>
<dbReference type="PIR" id="A04476">
    <property type="entry name" value="QQECAR"/>
</dbReference>
<dbReference type="PIR" id="I51821">
    <property type="entry name" value="I51821"/>
</dbReference>
<dbReference type="RefSeq" id="NP_957641.1">
    <property type="nucleotide sequence ID" value="NC_005327.1"/>
</dbReference>
<dbReference type="RefSeq" id="WP_000083830.1">
    <property type="nucleotide sequence ID" value="NZ_WVVN01000083.1"/>
</dbReference>
<dbReference type="RefSeq" id="YP_001096509.1">
    <property type="nucleotide sequence ID" value="NC_009133.1"/>
</dbReference>
<dbReference type="RefSeq" id="YP_002456233.1">
    <property type="nucleotide sequence ID" value="NC_011812.1"/>
</dbReference>
<dbReference type="RefSeq" id="YP_003108214.1">
    <property type="nucleotide sequence ID" value="NC_013121.1"/>
</dbReference>
<dbReference type="RefSeq" id="YP_003108323.1">
    <property type="nucleotide sequence ID" value="NC_013122.1"/>
</dbReference>
<dbReference type="RefSeq" id="YP_004869996.1">
    <property type="nucleotide sequence ID" value="NC_016039.1"/>
</dbReference>
<dbReference type="RefSeq" id="YP_006952182.1">
    <property type="nucleotide sequence ID" value="NC_019057.1"/>
</dbReference>
<dbReference type="RefSeq" id="YP_006953265.1">
    <property type="nucleotide sequence ID" value="NC_019071.1"/>
</dbReference>
<dbReference type="RefSeq" id="YP_006953363.1">
    <property type="nucleotide sequence ID" value="NC_019072.1"/>
</dbReference>
<dbReference type="RefSeq" id="YP_006953800.1">
    <property type="nucleotide sequence ID" value="NC_019089.1"/>
</dbReference>
<dbReference type="RefSeq" id="YP_006953885.1">
    <property type="nucleotide sequence ID" value="NC_019090.1"/>
</dbReference>
<dbReference type="RefSeq" id="YP_006954159.1">
    <property type="nucleotide sequence ID" value="NC_019094.1"/>
</dbReference>
<dbReference type="RefSeq" id="YP_006954221.1">
    <property type="nucleotide sequence ID" value="NC_019095.1"/>
</dbReference>
<dbReference type="RefSeq" id="YP_006990697.1">
    <property type="nucleotide sequence ID" value="NC_019424.1"/>
</dbReference>
<dbReference type="RefSeq" id="YP_007447499.1">
    <property type="nucleotide sequence ID" value="NC_020278.2"/>
</dbReference>
<dbReference type="RefSeq" id="YP_009066513.1">
    <property type="nucleotide sequence ID" value="NC_025106.1"/>
</dbReference>
<dbReference type="SMR" id="P03847"/>
<dbReference type="OrthoDB" id="6506470at2"/>
<dbReference type="GO" id="GO:0003677">
    <property type="term" value="F:DNA binding"/>
    <property type="evidence" value="ECO:0007669"/>
    <property type="project" value="UniProtKB-KW"/>
</dbReference>
<dbReference type="GO" id="GO:0006276">
    <property type="term" value="P:plasmid maintenance"/>
    <property type="evidence" value="ECO:0007669"/>
    <property type="project" value="UniProtKB-KW"/>
</dbReference>
<dbReference type="InterPro" id="IPR019661">
    <property type="entry name" value="RepA2"/>
</dbReference>
<dbReference type="NCBIfam" id="NF010256">
    <property type="entry name" value="PRK13702.1"/>
    <property type="match status" value="1"/>
</dbReference>
<dbReference type="Pfam" id="PF10723">
    <property type="entry name" value="RepB-RCR_reg"/>
    <property type="match status" value="1"/>
</dbReference>
<comment type="function">
    <text>This protein is involved in the determination of copy number in gene replication. It binds to the repA promoter thus inhibiting the synthesis of the mRNA for the initiator protein RepA.</text>
</comment>
<organism>
    <name type="scientific">Escherichia coli</name>
    <dbReference type="NCBI Taxonomy" id="562"/>
    <lineage>
        <taxon>Bacteria</taxon>
        <taxon>Pseudomonadati</taxon>
        <taxon>Pseudomonadota</taxon>
        <taxon>Gammaproteobacteria</taxon>
        <taxon>Enterobacterales</taxon>
        <taxon>Enterobacteriaceae</taxon>
        <taxon>Escherichia</taxon>
    </lineage>
</organism>
<proteinExistence type="predicted"/>
<protein>
    <recommendedName>
        <fullName>Replication regulatory protein repA2</fullName>
    </recommendedName>
    <alternativeName>
        <fullName>Protein CopB</fullName>
    </alternativeName>
</protein>
<gene>
    <name type="primary">repA2</name>
    <name type="synonym">copB</name>
</gene>
<geneLocation type="plasmid">
    <name>IncFII R100</name>
    <name>NR1</name>
</geneLocation>
<geneLocation type="plasmid">
    <name>R6-5</name>
</geneLocation>
<geneLocation type="plasmid">
    <name>IncFVI pSU212</name>
</geneLocation>
<reference key="1">
    <citation type="journal article" date="1980" name="Mol. Gen. Genet.">
        <title>Genes and sites involved in replication and incompatibility of an R100 plasmid derivative based on nucleotide sequence analysis.</title>
        <authorList>
            <person name="Rosen J."/>
            <person name="Ryder T."/>
            <person name="Inokuchi H."/>
            <person name="Ohtsubo H."/>
            <person name="Ohtsubo E."/>
        </authorList>
    </citation>
    <scope>NUCLEOTIDE SEQUENCE [GENOMIC DNA]</scope>
    <source>
        <plasmid>IncFII R100 (NR1)</plasmid>
    </source>
</reference>
<reference key="2">
    <citation type="journal article" date="1986" name="Adv. Biophys.">
        <title>DNA replication of the resistance plasmid R100 and its control.</title>
        <authorList>
            <person name="Ohtsubo H."/>
            <person name="Ryder T.B."/>
            <person name="Maeda Y."/>
            <person name="Armstrong K."/>
            <person name="Ohtsubo E."/>
        </authorList>
    </citation>
    <scope>NUCLEOTIDE SEQUENCE [GENOMIC DNA]</scope>
    <source>
        <plasmid>IncFII R100 (NR1)</plasmid>
    </source>
</reference>
<reference key="3">
    <citation type="journal article" date="1981" name="Proc. Natl. Acad. Sci. U.S.A.">
        <title>Regulation of DNA replication: 'target' determinant of the replication control elements of plasmid R6-5 lies within a control element gene.</title>
        <authorList>
            <person name="Danbara H."/>
            <person name="Brady G."/>
            <person name="Timmis J.K."/>
            <person name="Timmis K.N."/>
        </authorList>
    </citation>
    <scope>NUCLEOTIDE SEQUENCE [GENOMIC DNA]</scope>
    <source>
        <plasmid>R6-5</plasmid>
    </source>
</reference>
<reference key="4">
    <citation type="journal article" date="1987" name="J. Bacteriol.">
        <title>Transcriptional pausing in a region important for plasmid NR1 replication control.</title>
        <authorList>
            <person name="Dong X.N."/>
            <person name="Womble D.D."/>
            <person name="Rownd R.H."/>
        </authorList>
    </citation>
    <scope>NUCLEOTIDE SEQUENCE [GENOMIC DNA]</scope>
    <source>
        <plasmid>IncFII R100 (NR1)</plasmid>
    </source>
</reference>
<reference key="5">
    <citation type="journal article" date="1985" name="J. Mol. Biol.">
        <title>Transcription of the replication control region of the IncFII R-plasmid NR1 in vitro and in vivo.</title>
        <authorList>
            <person name="Womble D.D."/>
            <person name="Sampathkumar P."/>
            <person name="Easton A.M."/>
            <person name="Luckow V.A."/>
            <person name="Rownd R.H."/>
        </authorList>
    </citation>
    <scope>NUCLEOTIDE SEQUENCE [GENOMIC DNA]</scope>
    <source>
        <plasmid>IncFII R100 (NR1)</plasmid>
    </source>
</reference>
<reference key="6">
    <citation type="journal article" date="1991" name="J. Gen. Microbiol.">
        <title>Isolation and evolutionary analysis of a RepFVIB replicon of the plasmid pSU212.</title>
        <authorList>
            <person name="Lopez J."/>
            <person name="Delgado D."/>
            <person name="Andres I."/>
            <person name="Ortiz J.M."/>
            <person name="Rodriguez J.C."/>
        </authorList>
    </citation>
    <scope>NUCLEOTIDE SEQUENCE [GENOMIC DNA]</scope>
    <source>
        <plasmid>IncFVI pSU212</plasmid>
    </source>
</reference>
<sequence>MSQTENAVTSSSGAKRAYRKGNPLSDAEKQRLSVARKRASFKEVKVFLEPKYKAMLMQMCHEDGLTQAEVLTALIKSEAQKRCM</sequence>
<name>COPB2_ECOLX</name>